<proteinExistence type="evidence at transcript level"/>
<feature type="signal peptide" evidence="1">
    <location>
        <begin position="1"/>
        <end position="18"/>
    </location>
</feature>
<feature type="chain" id="PRO_0000018469" description="Lysozyme C">
    <location>
        <begin position="19"/>
        <end position="148"/>
    </location>
</feature>
<feature type="domain" description="C-type lysozyme" evidence="2">
    <location>
        <begin position="19"/>
        <end position="148"/>
    </location>
</feature>
<feature type="active site" evidence="2">
    <location>
        <position position="53"/>
    </location>
</feature>
<feature type="active site" evidence="2">
    <location>
        <position position="71"/>
    </location>
</feature>
<feature type="disulfide bond" evidence="2">
    <location>
        <begin position="24"/>
        <end position="146"/>
    </location>
</feature>
<feature type="disulfide bond" evidence="2">
    <location>
        <begin position="48"/>
        <end position="134"/>
    </location>
</feature>
<feature type="disulfide bond" evidence="2">
    <location>
        <begin position="83"/>
        <end position="99"/>
    </location>
</feature>
<feature type="disulfide bond" evidence="2">
    <location>
        <begin position="95"/>
        <end position="113"/>
    </location>
</feature>
<organism>
    <name type="scientific">Leptonychotes weddellii</name>
    <name type="common">Weddell seal</name>
    <name type="synonym">Otaria weddellii</name>
    <dbReference type="NCBI Taxonomy" id="9713"/>
    <lineage>
        <taxon>Eukaryota</taxon>
        <taxon>Metazoa</taxon>
        <taxon>Chordata</taxon>
        <taxon>Craniata</taxon>
        <taxon>Vertebrata</taxon>
        <taxon>Euteleostomi</taxon>
        <taxon>Mammalia</taxon>
        <taxon>Eutheria</taxon>
        <taxon>Laurasiatheria</taxon>
        <taxon>Carnivora</taxon>
        <taxon>Caniformia</taxon>
        <taxon>Pinnipedia</taxon>
        <taxon>Phocidae</taxon>
        <taxon>Monachinae</taxon>
        <taxon>Lobodontini</taxon>
        <taxon>Leptonychotes</taxon>
    </lineage>
</organism>
<keyword id="KW-0929">Antimicrobial</keyword>
<keyword id="KW-0081">Bacteriolytic enzyme</keyword>
<keyword id="KW-1015">Disulfide bond</keyword>
<keyword id="KW-0326">Glycosidase</keyword>
<keyword id="KW-0378">Hydrolase</keyword>
<keyword id="KW-1185">Reference proteome</keyword>
<keyword id="KW-0964">Secreted</keyword>
<keyword id="KW-0732">Signal</keyword>
<evidence type="ECO:0000250" key="1"/>
<evidence type="ECO:0000255" key="2">
    <source>
        <dbReference type="PROSITE-ProRule" id="PRU00680"/>
    </source>
</evidence>
<name>LYSC_LEPWE</name>
<accession>Q659U0</accession>
<protein>
    <recommendedName>
        <fullName>Lysozyme C</fullName>
        <ecNumber>3.2.1.17</ecNumber>
    </recommendedName>
    <alternativeName>
        <fullName>1,4-beta-N-acetylmuramidase C</fullName>
    </alternativeName>
</protein>
<comment type="function">
    <text evidence="2">Lysozymes have primarily a bacteriolytic function; those in tissues and body fluids are associated with the monocyte-macrophage system and enhance the activity of immunoagents.</text>
</comment>
<comment type="catalytic activity">
    <reaction>
        <text>Hydrolysis of (1-&gt;4)-beta-linkages between N-acetylmuramic acid and N-acetyl-D-glucosamine residues in a peptidoglycan and between N-acetyl-D-glucosamine residues in chitodextrins.</text>
        <dbReference type="EC" id="3.2.1.17"/>
    </reaction>
</comment>
<comment type="subunit">
    <text evidence="1">Monomer.</text>
</comment>
<comment type="subcellular location">
    <subcellularLocation>
        <location evidence="1">Secreted</location>
    </subcellularLocation>
</comment>
<comment type="miscellaneous">
    <text>Lysozyme C is capable of both hydrolysis and transglycosylation; it also shows a slight esterase activity. It acts rapidly on both peptide-substituted and unsubstituted peptidoglycan, and slowly on chitin oligosaccharides.</text>
</comment>
<comment type="similarity">
    <text evidence="2">Belongs to the glycosyl hydrolase 22 family.</text>
</comment>
<reference key="1">
    <citation type="submission" date="2004-09" db="EMBL/GenBank/DDBJ databases">
        <title>Potential immune markers from a range of phocid seals.</title>
        <authorList>
            <person name="Hammond J.A."/>
            <person name="Hall A.J."/>
        </authorList>
    </citation>
    <scope>NUCLEOTIDE SEQUENCE [MRNA]</scope>
    <source>
        <tissue>Leukocyte</tissue>
    </source>
</reference>
<sequence length="148" mass="16500">MKAPLLLGLLLLSVTVQGKVFERCDLARTLKRLGLAGFKGVSLANWMCLAKWESDYNTKATNYNPGSRSTDYGIFQINSRYWCNDGKTPRAVNSCHIPCSDLLKDDITQAVACAKRVVSDPNGIRAWVAWRAHCENQDVSQYVRNCGV</sequence>
<dbReference type="EC" id="3.2.1.17"/>
<dbReference type="EMBL" id="AJ831413">
    <property type="protein sequence ID" value="CAH39864.1"/>
    <property type="molecule type" value="mRNA"/>
</dbReference>
<dbReference type="RefSeq" id="NP_001276996.1">
    <property type="nucleotide sequence ID" value="NM_001290067.1"/>
</dbReference>
<dbReference type="SMR" id="Q659U0"/>
<dbReference type="STRING" id="9713.Q659U0"/>
<dbReference type="CAZy" id="GH22">
    <property type="family name" value="Glycoside Hydrolase Family 22"/>
</dbReference>
<dbReference type="GeneID" id="102727947"/>
<dbReference type="KEGG" id="lww:102727947"/>
<dbReference type="CTD" id="4069"/>
<dbReference type="OrthoDB" id="17373at2759"/>
<dbReference type="Proteomes" id="UP000245341">
    <property type="component" value="Unplaced"/>
</dbReference>
<dbReference type="GO" id="GO:0005576">
    <property type="term" value="C:extracellular region"/>
    <property type="evidence" value="ECO:0007669"/>
    <property type="project" value="UniProtKB-SubCell"/>
</dbReference>
<dbReference type="GO" id="GO:0003796">
    <property type="term" value="F:lysozyme activity"/>
    <property type="evidence" value="ECO:0007669"/>
    <property type="project" value="UniProtKB-EC"/>
</dbReference>
<dbReference type="GO" id="GO:0050829">
    <property type="term" value="P:defense response to Gram-negative bacterium"/>
    <property type="evidence" value="ECO:0007669"/>
    <property type="project" value="TreeGrafter"/>
</dbReference>
<dbReference type="GO" id="GO:0050830">
    <property type="term" value="P:defense response to Gram-positive bacterium"/>
    <property type="evidence" value="ECO:0007669"/>
    <property type="project" value="TreeGrafter"/>
</dbReference>
<dbReference type="GO" id="GO:0031640">
    <property type="term" value="P:killing of cells of another organism"/>
    <property type="evidence" value="ECO:0007669"/>
    <property type="project" value="UniProtKB-KW"/>
</dbReference>
<dbReference type="CDD" id="cd16897">
    <property type="entry name" value="LYZ_C"/>
    <property type="match status" value="1"/>
</dbReference>
<dbReference type="FunFam" id="1.10.530.10:FF:000001">
    <property type="entry name" value="Lysozyme C"/>
    <property type="match status" value="1"/>
</dbReference>
<dbReference type="Gene3D" id="1.10.530.10">
    <property type="match status" value="1"/>
</dbReference>
<dbReference type="InterPro" id="IPR001916">
    <property type="entry name" value="Glyco_hydro_22"/>
</dbReference>
<dbReference type="InterPro" id="IPR019799">
    <property type="entry name" value="Glyco_hydro_22_CS"/>
</dbReference>
<dbReference type="InterPro" id="IPR000974">
    <property type="entry name" value="Glyco_hydro_22_lys"/>
</dbReference>
<dbReference type="InterPro" id="IPR023346">
    <property type="entry name" value="Lysozyme-like_dom_sf"/>
</dbReference>
<dbReference type="PANTHER" id="PTHR11407">
    <property type="entry name" value="LYSOZYME C"/>
    <property type="match status" value="1"/>
</dbReference>
<dbReference type="PANTHER" id="PTHR11407:SF28">
    <property type="entry name" value="LYSOZYME C"/>
    <property type="match status" value="1"/>
</dbReference>
<dbReference type="Pfam" id="PF00062">
    <property type="entry name" value="Lys"/>
    <property type="match status" value="1"/>
</dbReference>
<dbReference type="PRINTS" id="PR00137">
    <property type="entry name" value="LYSOZYME"/>
</dbReference>
<dbReference type="PRINTS" id="PR00135">
    <property type="entry name" value="LYZLACT"/>
</dbReference>
<dbReference type="SMART" id="SM00263">
    <property type="entry name" value="LYZ1"/>
    <property type="match status" value="1"/>
</dbReference>
<dbReference type="SUPFAM" id="SSF53955">
    <property type="entry name" value="Lysozyme-like"/>
    <property type="match status" value="1"/>
</dbReference>
<dbReference type="PROSITE" id="PS00128">
    <property type="entry name" value="GLYCOSYL_HYDROL_F22_1"/>
    <property type="match status" value="1"/>
</dbReference>
<dbReference type="PROSITE" id="PS51348">
    <property type="entry name" value="GLYCOSYL_HYDROL_F22_2"/>
    <property type="match status" value="1"/>
</dbReference>
<gene>
    <name type="primary">LYZ</name>
</gene>